<sequence length="234" mass="26598">MFSQIVLLLSAFIYVASATARRGTIKGRLDLAASNITGFVSTRTSFKLYQIGNFSTEYPYTSTTMFQDDEGNFEFANLPLNDGVNETTYYVMYPASMDFNLKPNRILIEFKNLENGTLQLNAFKNFFGREYFPSKDITYPEKLQSMKVHPYITVELLHKAPIRSYLQARNVSIFSTGIVGNILNSRWKLAGVITLIALVVFPIIVEKLDPETARAIREEAKRKQREKYAAVASK</sequence>
<evidence type="ECO:0000255" key="1"/>
<evidence type="ECO:0000269" key="2">
    <source>
    </source>
</evidence>
<evidence type="ECO:0000269" key="3">
    <source>
    </source>
</evidence>
<evidence type="ECO:0000269" key="4">
    <source>
    </source>
</evidence>
<evidence type="ECO:0000269" key="5">
    <source>
    </source>
</evidence>
<evidence type="ECO:0000305" key="6"/>
<evidence type="ECO:0007829" key="7">
    <source>
        <dbReference type="PDB" id="6WB9"/>
    </source>
</evidence>
<evidence type="ECO:0007829" key="8">
    <source>
        <dbReference type="PDB" id="7KRA"/>
    </source>
</evidence>
<comment type="function">
    <text evidence="2 5">Involved in the export of PMA1, possibly through the monitoring or assisting of PMA1 folding and acquisition of competence to enter vesicles.</text>
</comment>
<comment type="interaction">
    <interactant intactId="EBI-26193">
        <id>P39543</id>
    </interactant>
    <interactant intactId="EBI-24977">
        <id>P40540</id>
        <label>EMC5</label>
    </interactant>
    <organismsDiffer>false</organismsDiffer>
    <experiments>3</experiments>
</comment>
<comment type="subcellular location">
    <subcellularLocation>
        <location evidence="2 3">Endoplasmic reticulum membrane</location>
        <topology evidence="2 3">Single-pass type I membrane protein</topology>
    </subcellularLocation>
</comment>
<comment type="miscellaneous">
    <text evidence="4">Present with 11700 molecules/cell in log phase SD medium.</text>
</comment>
<comment type="similarity">
    <text evidence="6">Belongs to the SOP4 family.</text>
</comment>
<dbReference type="EMBL" id="X77688">
    <property type="protein sequence ID" value="CAA54768.1"/>
    <property type="molecule type" value="Genomic_DNA"/>
</dbReference>
<dbReference type="EMBL" id="Z49467">
    <property type="protein sequence ID" value="CAA89487.1"/>
    <property type="molecule type" value="Genomic_DNA"/>
</dbReference>
<dbReference type="EMBL" id="AY693041">
    <property type="protein sequence ID" value="AAT93060.1"/>
    <property type="molecule type" value="Genomic_DNA"/>
</dbReference>
<dbReference type="EMBL" id="BK006943">
    <property type="protein sequence ID" value="DAA08615.1"/>
    <property type="molecule type" value="Genomic_DNA"/>
</dbReference>
<dbReference type="PIR" id="S46642">
    <property type="entry name" value="S46642"/>
</dbReference>
<dbReference type="RefSeq" id="NP_012343.1">
    <property type="nucleotide sequence ID" value="NM_001181625.1"/>
</dbReference>
<dbReference type="PDB" id="6WB9">
    <property type="method" value="EM"/>
    <property type="resolution" value="3.00 A"/>
    <property type="chains" value="7=1-234"/>
</dbReference>
<dbReference type="PDB" id="7KRA">
    <property type="method" value="EM"/>
    <property type="resolution" value="3.20 A"/>
    <property type="chains" value="G=1-234"/>
</dbReference>
<dbReference type="PDB" id="7KTX">
    <property type="method" value="EM"/>
    <property type="resolution" value="4.30 A"/>
    <property type="chains" value="G=1-234"/>
</dbReference>
<dbReference type="PDBsum" id="6WB9"/>
<dbReference type="PDBsum" id="7KRA"/>
<dbReference type="PDBsum" id="7KTX"/>
<dbReference type="EMDB" id="EMD-21587"/>
<dbReference type="EMDB" id="EMD-23003"/>
<dbReference type="EMDB" id="EMD-23033"/>
<dbReference type="SMR" id="P39543"/>
<dbReference type="BioGRID" id="33571">
    <property type="interactions" value="94"/>
</dbReference>
<dbReference type="DIP" id="DIP-5094N"/>
<dbReference type="FunCoup" id="P39543">
    <property type="interactions" value="51"/>
</dbReference>
<dbReference type="IntAct" id="P39543">
    <property type="interactions" value="18"/>
</dbReference>
<dbReference type="MINT" id="P39543"/>
<dbReference type="STRING" id="4932.YJL192C"/>
<dbReference type="GlyCosmos" id="P39543">
    <property type="glycosylation" value="5 sites, No reported glycans"/>
</dbReference>
<dbReference type="GlyGen" id="P39543">
    <property type="glycosylation" value="5 sites"/>
</dbReference>
<dbReference type="PaxDb" id="4932-YJL192C"/>
<dbReference type="PeptideAtlas" id="P39543"/>
<dbReference type="EnsemblFungi" id="YJL192C_mRNA">
    <property type="protein sequence ID" value="YJL192C"/>
    <property type="gene ID" value="YJL192C"/>
</dbReference>
<dbReference type="GeneID" id="853247"/>
<dbReference type="KEGG" id="sce:YJL192C"/>
<dbReference type="AGR" id="SGD:S000003728"/>
<dbReference type="SGD" id="S000003728">
    <property type="gene designation" value="SOP4"/>
</dbReference>
<dbReference type="VEuPathDB" id="FungiDB:YJL192C"/>
<dbReference type="eggNOG" id="ENOG502RXGD">
    <property type="taxonomic scope" value="Eukaryota"/>
</dbReference>
<dbReference type="HOGENOM" id="CLU_102669_0_0_1"/>
<dbReference type="InParanoid" id="P39543"/>
<dbReference type="OMA" id="PYITVEL"/>
<dbReference type="OrthoDB" id="27095at2759"/>
<dbReference type="BioCyc" id="YEAST:G3O-31624-MONOMER"/>
<dbReference type="BioGRID-ORCS" id="853247">
    <property type="hits" value="1 hit in 10 CRISPR screens"/>
</dbReference>
<dbReference type="PRO" id="PR:P39543"/>
<dbReference type="Proteomes" id="UP000002311">
    <property type="component" value="Chromosome X"/>
</dbReference>
<dbReference type="RNAct" id="P39543">
    <property type="molecule type" value="protein"/>
</dbReference>
<dbReference type="GO" id="GO:0005783">
    <property type="term" value="C:endoplasmic reticulum"/>
    <property type="evidence" value="ECO:0000314"/>
    <property type="project" value="SGD"/>
</dbReference>
<dbReference type="GO" id="GO:0005789">
    <property type="term" value="C:endoplasmic reticulum membrane"/>
    <property type="evidence" value="ECO:0007669"/>
    <property type="project" value="UniProtKB-SubCell"/>
</dbReference>
<dbReference type="GO" id="GO:0016020">
    <property type="term" value="C:membrane"/>
    <property type="evidence" value="ECO:0000314"/>
    <property type="project" value="SGD"/>
</dbReference>
<dbReference type="GO" id="GO:0006888">
    <property type="term" value="P:endoplasmic reticulum to Golgi vesicle-mediated transport"/>
    <property type="evidence" value="ECO:0000315"/>
    <property type="project" value="SGD"/>
</dbReference>
<dbReference type="GO" id="GO:0015031">
    <property type="term" value="P:protein transport"/>
    <property type="evidence" value="ECO:0007669"/>
    <property type="project" value="UniProtKB-KW"/>
</dbReference>
<dbReference type="InterPro" id="IPR031395">
    <property type="entry name" value="Sop4"/>
</dbReference>
<dbReference type="Pfam" id="PF17081">
    <property type="entry name" value="SOP4"/>
    <property type="match status" value="1"/>
</dbReference>
<feature type="signal peptide" evidence="1">
    <location>
        <begin position="1"/>
        <end position="18"/>
    </location>
</feature>
<feature type="chain" id="PRO_0000014332" description="Protein SOP4">
    <location>
        <begin position="19"/>
        <end position="234"/>
    </location>
</feature>
<feature type="topological domain" description="Lumenal" evidence="1">
    <location>
        <begin position="19"/>
        <end position="188"/>
    </location>
</feature>
<feature type="transmembrane region" description="Helical" evidence="1">
    <location>
        <begin position="189"/>
        <end position="209"/>
    </location>
</feature>
<feature type="topological domain" description="Cytoplasmic" evidence="1">
    <location>
        <begin position="210"/>
        <end position="234"/>
    </location>
</feature>
<feature type="glycosylation site" description="N-linked (GlcNAc...) asparagine" evidence="1">
    <location>
        <position position="35"/>
    </location>
</feature>
<feature type="glycosylation site" description="N-linked (GlcNAc...) asparagine" evidence="1">
    <location>
        <position position="53"/>
    </location>
</feature>
<feature type="glycosylation site" description="N-linked (GlcNAc...) asparagine" evidence="1">
    <location>
        <position position="85"/>
    </location>
</feature>
<feature type="glycosylation site" description="N-linked (GlcNAc...) asparagine" evidence="1">
    <location>
        <position position="115"/>
    </location>
</feature>
<feature type="glycosylation site" description="N-linked (GlcNAc...) asparagine" evidence="1">
    <location>
        <position position="170"/>
    </location>
</feature>
<feature type="strand" evidence="7">
    <location>
        <begin position="23"/>
        <end position="25"/>
    </location>
</feature>
<feature type="strand" evidence="8">
    <location>
        <begin position="26"/>
        <end position="28"/>
    </location>
</feature>
<feature type="helix" evidence="7">
    <location>
        <begin position="32"/>
        <end position="34"/>
    </location>
</feature>
<feature type="helix" evidence="7">
    <location>
        <begin position="41"/>
        <end position="43"/>
    </location>
</feature>
<feature type="strand" evidence="7">
    <location>
        <begin position="44"/>
        <end position="53"/>
    </location>
</feature>
<feature type="strand" evidence="7">
    <location>
        <begin position="55"/>
        <end position="58"/>
    </location>
</feature>
<feature type="strand" evidence="7">
    <location>
        <begin position="61"/>
        <end position="64"/>
    </location>
</feature>
<feature type="strand" evidence="7">
    <location>
        <begin position="67"/>
        <end position="70"/>
    </location>
</feature>
<feature type="strand" evidence="8">
    <location>
        <begin position="72"/>
        <end position="74"/>
    </location>
</feature>
<feature type="strand" evidence="7">
    <location>
        <begin position="75"/>
        <end position="78"/>
    </location>
</feature>
<feature type="strand" evidence="8">
    <location>
        <begin position="83"/>
        <end position="85"/>
    </location>
</feature>
<feature type="strand" evidence="7">
    <location>
        <begin position="89"/>
        <end position="99"/>
    </location>
</feature>
<feature type="strand" evidence="8">
    <location>
        <begin position="101"/>
        <end position="103"/>
    </location>
</feature>
<feature type="strand" evidence="7">
    <location>
        <begin position="104"/>
        <end position="112"/>
    </location>
</feature>
<feature type="strand" evidence="7">
    <location>
        <begin position="116"/>
        <end position="125"/>
    </location>
</feature>
<feature type="strand" evidence="8">
    <location>
        <begin position="135"/>
        <end position="139"/>
    </location>
</feature>
<feature type="strand" evidence="8">
    <location>
        <begin position="144"/>
        <end position="146"/>
    </location>
</feature>
<gene>
    <name type="primary">SOP4</name>
    <name type="ordered locus">YJL192C</name>
    <name type="ORF">J0351</name>
</gene>
<keyword id="KW-0002">3D-structure</keyword>
<keyword id="KW-0256">Endoplasmic reticulum</keyword>
<keyword id="KW-0325">Glycoprotein</keyword>
<keyword id="KW-0472">Membrane</keyword>
<keyword id="KW-0653">Protein transport</keyword>
<keyword id="KW-1185">Reference proteome</keyword>
<keyword id="KW-0732">Signal</keyword>
<keyword id="KW-0812">Transmembrane</keyword>
<keyword id="KW-1133">Transmembrane helix</keyword>
<keyword id="KW-0813">Transport</keyword>
<reference key="1">
    <citation type="journal article" date="1994" name="Yeast">
        <title>The sequence of a 36 kb segment on the left arm of yeast chromosome X identifies 24 open reading frames including NUC1, PRP21 (SPP91), CDC6, CRY2, the gene for S24, a homologue to the aconitase gene ACO1 and two homologues to chromosome III genes.</title>
        <authorList>
            <person name="Purnelle B."/>
            <person name="Coster F."/>
            <person name="Goffeau A."/>
        </authorList>
    </citation>
    <scope>NUCLEOTIDE SEQUENCE [GENOMIC DNA]</scope>
    <source>
        <strain>ATCC 204508 / S288c</strain>
    </source>
</reference>
<reference key="2">
    <citation type="journal article" date="1996" name="EMBO J.">
        <title>Complete nucleotide sequence of Saccharomyces cerevisiae chromosome X.</title>
        <authorList>
            <person name="Galibert F."/>
            <person name="Alexandraki D."/>
            <person name="Baur A."/>
            <person name="Boles E."/>
            <person name="Chalwatzis N."/>
            <person name="Chuat J.-C."/>
            <person name="Coster F."/>
            <person name="Cziepluch C."/>
            <person name="de Haan M."/>
            <person name="Domdey H."/>
            <person name="Durand P."/>
            <person name="Entian K.-D."/>
            <person name="Gatius M."/>
            <person name="Goffeau A."/>
            <person name="Grivell L.A."/>
            <person name="Hennemann A."/>
            <person name="Herbert C.J."/>
            <person name="Heumann K."/>
            <person name="Hilger F."/>
            <person name="Hollenberg C.P."/>
            <person name="Huang M.-E."/>
            <person name="Jacq C."/>
            <person name="Jauniaux J.-C."/>
            <person name="Katsoulou C."/>
            <person name="Kirchrath L."/>
            <person name="Kleine K."/>
            <person name="Kordes E."/>
            <person name="Koetter P."/>
            <person name="Liebl S."/>
            <person name="Louis E.J."/>
            <person name="Manus V."/>
            <person name="Mewes H.-W."/>
            <person name="Miosga T."/>
            <person name="Obermaier B."/>
            <person name="Perea J."/>
            <person name="Pohl T.M."/>
            <person name="Portetelle D."/>
            <person name="Pujol A."/>
            <person name="Purnelle B."/>
            <person name="Ramezani Rad M."/>
            <person name="Rasmussen S.W."/>
            <person name="Rose M."/>
            <person name="Rossau R."/>
            <person name="Schaaff-Gerstenschlaeger I."/>
            <person name="Smits P.H.M."/>
            <person name="Scarcez T."/>
            <person name="Soriano N."/>
            <person name="To Van D."/>
            <person name="Tzermia M."/>
            <person name="Van Broekhoven A."/>
            <person name="Vandenbol M."/>
            <person name="Wedler H."/>
            <person name="von Wettstein D."/>
            <person name="Wambutt R."/>
            <person name="Zagulski M."/>
            <person name="Zollner A."/>
            <person name="Karpfinger-Hartl L."/>
        </authorList>
    </citation>
    <scope>NUCLEOTIDE SEQUENCE [LARGE SCALE GENOMIC DNA]</scope>
    <source>
        <strain>ATCC 204508 / S288c</strain>
    </source>
</reference>
<reference key="3">
    <citation type="journal article" date="2014" name="G3 (Bethesda)">
        <title>The reference genome sequence of Saccharomyces cerevisiae: Then and now.</title>
        <authorList>
            <person name="Engel S.R."/>
            <person name="Dietrich F.S."/>
            <person name="Fisk D.G."/>
            <person name="Binkley G."/>
            <person name="Balakrishnan R."/>
            <person name="Costanzo M.C."/>
            <person name="Dwight S.S."/>
            <person name="Hitz B.C."/>
            <person name="Karra K."/>
            <person name="Nash R.S."/>
            <person name="Weng S."/>
            <person name="Wong E.D."/>
            <person name="Lloyd P."/>
            <person name="Skrzypek M.S."/>
            <person name="Miyasato S.R."/>
            <person name="Simison M."/>
            <person name="Cherry J.M."/>
        </authorList>
    </citation>
    <scope>GENOME REANNOTATION</scope>
    <source>
        <strain>ATCC 204508 / S288c</strain>
    </source>
</reference>
<reference key="4">
    <citation type="journal article" date="2007" name="Genome Res.">
        <title>Approaching a complete repository of sequence-verified protein-encoding clones for Saccharomyces cerevisiae.</title>
        <authorList>
            <person name="Hu Y."/>
            <person name="Rolfs A."/>
            <person name="Bhullar B."/>
            <person name="Murthy T.V.S."/>
            <person name="Zhu C."/>
            <person name="Berger M.F."/>
            <person name="Camargo A.A."/>
            <person name="Kelley F."/>
            <person name="McCarron S."/>
            <person name="Jepson D."/>
            <person name="Richardson A."/>
            <person name="Raphael J."/>
            <person name="Moreira D."/>
            <person name="Taycher E."/>
            <person name="Zuo D."/>
            <person name="Mohr S."/>
            <person name="Kane M.F."/>
            <person name="Williamson J."/>
            <person name="Simpson A.J.G."/>
            <person name="Bulyk M.L."/>
            <person name="Harlow E."/>
            <person name="Marsischky G."/>
            <person name="Kolodner R.D."/>
            <person name="LaBaer J."/>
        </authorList>
    </citation>
    <scope>NUCLEOTIDE SEQUENCE [GENOMIC DNA]</scope>
    <source>
        <strain>ATCC 204508 / S288c</strain>
    </source>
</reference>
<reference key="5">
    <citation type="journal article" date="1997" name="J. Cell Biol.">
        <title>Novel genes involved in endosomal traffic in yeast revealed by suppression of a targeting-defective plasma membrane ATPase mutant.</title>
        <authorList>
            <person name="Luo W.-J."/>
            <person name="Chang A."/>
        </authorList>
    </citation>
    <scope>FUNCTION</scope>
</reference>
<reference key="6">
    <citation type="journal article" date="2002" name="Traffic">
        <title>An ER membrane protein, Sop4, facilitates ER export of the yeast plasma membrane [H+]ATPase, Pma1.</title>
        <authorList>
            <person name="Luo W.J."/>
            <person name="Gong X.H."/>
            <person name="Chang A."/>
        </authorList>
    </citation>
    <scope>FUNCTION</scope>
    <scope>SUBCELLULAR LOCATION</scope>
</reference>
<reference key="7">
    <citation type="journal article" date="2003" name="Nature">
        <title>Global analysis of protein localization in budding yeast.</title>
        <authorList>
            <person name="Huh W.-K."/>
            <person name="Falvo J.V."/>
            <person name="Gerke L.C."/>
            <person name="Carroll A.S."/>
            <person name="Howson R.W."/>
            <person name="Weissman J.S."/>
            <person name="O'Shea E.K."/>
        </authorList>
    </citation>
    <scope>SUBCELLULAR LOCATION [LARGE SCALE ANALYSIS]</scope>
</reference>
<reference key="8">
    <citation type="journal article" date="2003" name="Nature">
        <title>Global analysis of protein expression in yeast.</title>
        <authorList>
            <person name="Ghaemmaghami S."/>
            <person name="Huh W.-K."/>
            <person name="Bower K."/>
            <person name="Howson R.W."/>
            <person name="Belle A."/>
            <person name="Dephoure N."/>
            <person name="O'Shea E.K."/>
            <person name="Weissman J.S."/>
        </authorList>
    </citation>
    <scope>LEVEL OF PROTEIN EXPRESSION [LARGE SCALE ANALYSIS]</scope>
</reference>
<accession>P39543</accession>
<accession>D6VVZ9</accession>
<organism>
    <name type="scientific">Saccharomyces cerevisiae (strain ATCC 204508 / S288c)</name>
    <name type="common">Baker's yeast</name>
    <dbReference type="NCBI Taxonomy" id="559292"/>
    <lineage>
        <taxon>Eukaryota</taxon>
        <taxon>Fungi</taxon>
        <taxon>Dikarya</taxon>
        <taxon>Ascomycota</taxon>
        <taxon>Saccharomycotina</taxon>
        <taxon>Saccharomycetes</taxon>
        <taxon>Saccharomycetales</taxon>
        <taxon>Saccharomycetaceae</taxon>
        <taxon>Saccharomyces</taxon>
    </lineage>
</organism>
<name>SOP4_YEAST</name>
<proteinExistence type="evidence at protein level"/>
<protein>
    <recommendedName>
        <fullName>Protein SOP4</fullName>
    </recommendedName>
    <alternativeName>
        <fullName>Suppressor of PMA1-7 protein 4</fullName>
    </alternativeName>
</protein>